<reference key="1">
    <citation type="journal article" date="2008" name="PLoS Genet.">
        <title>Complete genome sequence of the N2-fixing broad host range endophyte Klebsiella pneumoniae 342 and virulence predictions verified in mice.</title>
        <authorList>
            <person name="Fouts D.E."/>
            <person name="Tyler H.L."/>
            <person name="DeBoy R.T."/>
            <person name="Daugherty S."/>
            <person name="Ren Q."/>
            <person name="Badger J.H."/>
            <person name="Durkin A.S."/>
            <person name="Huot H."/>
            <person name="Shrivastava S."/>
            <person name="Kothari S."/>
            <person name="Dodson R.J."/>
            <person name="Mohamoud Y."/>
            <person name="Khouri H."/>
            <person name="Roesch L.F.W."/>
            <person name="Krogfelt K.A."/>
            <person name="Struve C."/>
            <person name="Triplett E.W."/>
            <person name="Methe B.A."/>
        </authorList>
    </citation>
    <scope>NUCLEOTIDE SEQUENCE [LARGE SCALE GENOMIC DNA]</scope>
    <source>
        <strain>342</strain>
    </source>
</reference>
<gene>
    <name evidence="1" type="primary">nikR</name>
    <name type="ordered locus">KPK_0258</name>
</gene>
<sequence length="132" mass="14915">MQRVTLTLDDDLLAALDALSARRGYHNRSEAVRDILRDALNQDPPSPESRRGYAVLSYVYEHEKRELASRLVATQHHHHDLSVATLHVHISHEDCLEIAVLKGDMAEVQHFADDVIAQRGVRHGHLQCLADD</sequence>
<dbReference type="EMBL" id="CP000964">
    <property type="protein sequence ID" value="ACI08741.1"/>
    <property type="molecule type" value="Genomic_DNA"/>
</dbReference>
<dbReference type="SMR" id="B5XTJ9"/>
<dbReference type="KEGG" id="kpe:KPK_0258"/>
<dbReference type="HOGENOM" id="CLU_113319_1_4_6"/>
<dbReference type="Proteomes" id="UP000001734">
    <property type="component" value="Chromosome"/>
</dbReference>
<dbReference type="GO" id="GO:0003700">
    <property type="term" value="F:DNA-binding transcription factor activity"/>
    <property type="evidence" value="ECO:0007669"/>
    <property type="project" value="UniProtKB-UniRule"/>
</dbReference>
<dbReference type="GO" id="GO:0016151">
    <property type="term" value="F:nickel cation binding"/>
    <property type="evidence" value="ECO:0007669"/>
    <property type="project" value="UniProtKB-UniRule"/>
</dbReference>
<dbReference type="GO" id="GO:0043565">
    <property type="term" value="F:sequence-specific DNA binding"/>
    <property type="evidence" value="ECO:0007669"/>
    <property type="project" value="UniProtKB-ARBA"/>
</dbReference>
<dbReference type="GO" id="GO:0010045">
    <property type="term" value="P:response to nickel cation"/>
    <property type="evidence" value="ECO:0007669"/>
    <property type="project" value="InterPro"/>
</dbReference>
<dbReference type="CDD" id="cd22231">
    <property type="entry name" value="RHH_NikR_HicB-like"/>
    <property type="match status" value="1"/>
</dbReference>
<dbReference type="Gene3D" id="3.30.70.1150">
    <property type="entry name" value="ACT-like. Chain A, domain 2"/>
    <property type="match status" value="1"/>
</dbReference>
<dbReference type="Gene3D" id="1.10.1220.10">
    <property type="entry name" value="Met repressor-like"/>
    <property type="match status" value="1"/>
</dbReference>
<dbReference type="HAMAP" id="MF_00476">
    <property type="entry name" value="NikR"/>
    <property type="match status" value="1"/>
</dbReference>
<dbReference type="InterPro" id="IPR027271">
    <property type="entry name" value="Acetolactate_synth/TF_NikR_C"/>
</dbReference>
<dbReference type="InterPro" id="IPR045865">
    <property type="entry name" value="ACT-like_dom_sf"/>
</dbReference>
<dbReference type="InterPro" id="IPR013321">
    <property type="entry name" value="Arc_rbn_hlx_hlx"/>
</dbReference>
<dbReference type="InterPro" id="IPR002145">
    <property type="entry name" value="CopG"/>
</dbReference>
<dbReference type="InterPro" id="IPR050192">
    <property type="entry name" value="CopG/NikR_regulator"/>
</dbReference>
<dbReference type="InterPro" id="IPR022988">
    <property type="entry name" value="Ni_resp_reg_NikR"/>
</dbReference>
<dbReference type="InterPro" id="IPR014160">
    <property type="entry name" value="Nickel_NikR_proteobac"/>
</dbReference>
<dbReference type="InterPro" id="IPR010985">
    <property type="entry name" value="Ribbon_hlx_hlx"/>
</dbReference>
<dbReference type="InterPro" id="IPR014864">
    <property type="entry name" value="TF_NikR_Ni-bd_C"/>
</dbReference>
<dbReference type="NCBIfam" id="TIGR02793">
    <property type="entry name" value="nikR"/>
    <property type="match status" value="1"/>
</dbReference>
<dbReference type="NCBIfam" id="NF002815">
    <property type="entry name" value="PRK02967.1"/>
    <property type="match status" value="1"/>
</dbReference>
<dbReference type="NCBIfam" id="NF003381">
    <property type="entry name" value="PRK04460.1"/>
    <property type="match status" value="1"/>
</dbReference>
<dbReference type="PANTHER" id="PTHR34719">
    <property type="entry name" value="NICKEL-RESPONSIVE REGULATOR"/>
    <property type="match status" value="1"/>
</dbReference>
<dbReference type="PANTHER" id="PTHR34719:SF2">
    <property type="entry name" value="NICKEL-RESPONSIVE REGULATOR"/>
    <property type="match status" value="1"/>
</dbReference>
<dbReference type="Pfam" id="PF08753">
    <property type="entry name" value="NikR_C"/>
    <property type="match status" value="1"/>
</dbReference>
<dbReference type="Pfam" id="PF01402">
    <property type="entry name" value="RHH_1"/>
    <property type="match status" value="1"/>
</dbReference>
<dbReference type="SUPFAM" id="SSF55021">
    <property type="entry name" value="ACT-like"/>
    <property type="match status" value="1"/>
</dbReference>
<dbReference type="SUPFAM" id="SSF47598">
    <property type="entry name" value="Ribbon-helix-helix"/>
    <property type="match status" value="1"/>
</dbReference>
<protein>
    <recommendedName>
        <fullName evidence="1">Nickel-responsive regulator</fullName>
    </recommendedName>
</protein>
<feature type="chain" id="PRO_1000125831" description="Nickel-responsive regulator">
    <location>
        <begin position="1"/>
        <end position="132"/>
    </location>
</feature>
<feature type="binding site" evidence="1">
    <location>
        <position position="76"/>
    </location>
    <ligand>
        <name>Ni(2+)</name>
        <dbReference type="ChEBI" id="CHEBI:49786"/>
    </ligand>
</feature>
<feature type="binding site" evidence="1">
    <location>
        <position position="87"/>
    </location>
    <ligand>
        <name>Ni(2+)</name>
        <dbReference type="ChEBI" id="CHEBI:49786"/>
    </ligand>
</feature>
<feature type="binding site" evidence="1">
    <location>
        <position position="89"/>
    </location>
    <ligand>
        <name>Ni(2+)</name>
        <dbReference type="ChEBI" id="CHEBI:49786"/>
    </ligand>
</feature>
<feature type="binding site" evidence="1">
    <location>
        <position position="95"/>
    </location>
    <ligand>
        <name>Ni(2+)</name>
        <dbReference type="ChEBI" id="CHEBI:49786"/>
    </ligand>
</feature>
<organism>
    <name type="scientific">Klebsiella pneumoniae (strain 342)</name>
    <dbReference type="NCBI Taxonomy" id="507522"/>
    <lineage>
        <taxon>Bacteria</taxon>
        <taxon>Pseudomonadati</taxon>
        <taxon>Pseudomonadota</taxon>
        <taxon>Gammaproteobacteria</taxon>
        <taxon>Enterobacterales</taxon>
        <taxon>Enterobacteriaceae</taxon>
        <taxon>Klebsiella/Raoultella group</taxon>
        <taxon>Klebsiella</taxon>
        <taxon>Klebsiella pneumoniae complex</taxon>
    </lineage>
</organism>
<name>NIKR_KLEP3</name>
<comment type="function">
    <text evidence="1">Transcriptional repressor of the nikABCDE operon. Is active in the presence of excessive concentrations of intracellular nickel.</text>
</comment>
<comment type="cofactor">
    <cofactor evidence="1">
        <name>Ni(2+)</name>
        <dbReference type="ChEBI" id="CHEBI:49786"/>
    </cofactor>
    <text evidence="1">Binds 1 nickel ion per subunit.</text>
</comment>
<comment type="subunit">
    <text evidence="1">Homotetramer.</text>
</comment>
<comment type="similarity">
    <text evidence="1">Belongs to the transcriptional regulatory CopG/NikR family.</text>
</comment>
<keyword id="KW-0238">DNA-binding</keyword>
<keyword id="KW-0479">Metal-binding</keyword>
<keyword id="KW-0533">Nickel</keyword>
<keyword id="KW-0678">Repressor</keyword>
<keyword id="KW-0804">Transcription</keyword>
<keyword id="KW-0805">Transcription regulation</keyword>
<proteinExistence type="inferred from homology"/>
<accession>B5XTJ9</accession>
<evidence type="ECO:0000255" key="1">
    <source>
        <dbReference type="HAMAP-Rule" id="MF_00476"/>
    </source>
</evidence>